<gene>
    <name evidence="1" type="primary">rsxA</name>
    <name type="synonym">rnfA</name>
    <name type="ordered locus">SbBS512_E1816</name>
</gene>
<feature type="chain" id="PRO_1000191741" description="Ion-translocating oxidoreductase complex subunit A">
    <location>
        <begin position="1"/>
        <end position="193"/>
    </location>
</feature>
<feature type="transmembrane region" description="Helical" evidence="1">
    <location>
        <begin position="5"/>
        <end position="25"/>
    </location>
</feature>
<feature type="transmembrane region" description="Helical" evidence="1">
    <location>
        <begin position="39"/>
        <end position="59"/>
    </location>
</feature>
<feature type="transmembrane region" description="Helical" evidence="1">
    <location>
        <begin position="63"/>
        <end position="83"/>
    </location>
</feature>
<feature type="transmembrane region" description="Helical" evidence="1">
    <location>
        <begin position="102"/>
        <end position="122"/>
    </location>
</feature>
<feature type="transmembrane region" description="Helical" evidence="1">
    <location>
        <begin position="134"/>
        <end position="154"/>
    </location>
</feature>
<feature type="transmembrane region" description="Helical" evidence="1">
    <location>
        <begin position="171"/>
        <end position="191"/>
    </location>
</feature>
<reference key="1">
    <citation type="submission" date="2008-05" db="EMBL/GenBank/DDBJ databases">
        <title>Complete sequence of Shigella boydii serotype 18 strain BS512.</title>
        <authorList>
            <person name="Rasko D.A."/>
            <person name="Rosovitz M."/>
            <person name="Maurelli A.T."/>
            <person name="Myers G."/>
            <person name="Seshadri R."/>
            <person name="Cer R."/>
            <person name="Jiang L."/>
            <person name="Ravel J."/>
            <person name="Sebastian Y."/>
        </authorList>
    </citation>
    <scope>NUCLEOTIDE SEQUENCE [LARGE SCALE GENOMIC DNA]</scope>
    <source>
        <strain>CDC 3083-94 / BS512</strain>
    </source>
</reference>
<organism>
    <name type="scientific">Shigella boydii serotype 18 (strain CDC 3083-94 / BS512)</name>
    <dbReference type="NCBI Taxonomy" id="344609"/>
    <lineage>
        <taxon>Bacteria</taxon>
        <taxon>Pseudomonadati</taxon>
        <taxon>Pseudomonadota</taxon>
        <taxon>Gammaproteobacteria</taxon>
        <taxon>Enterobacterales</taxon>
        <taxon>Enterobacteriaceae</taxon>
        <taxon>Shigella</taxon>
    </lineage>
</organism>
<name>RSXA_SHIB3</name>
<sequence>MTDYLLLFVGTVLVNNFVLVKFLGLCPFMGVSKKLETAMGMGLATTFVMTLASICAWLIDTWILIPLNLIYLRTLAFILVIAVVVQFTEMVVRKTSPVLYRLLGIFLPLITTNCAVLGVALLNINLGHNFLQSALYGFSAAVGFSLVMVLFAAIRERLAVADVPAPFRGNAIALITAGLMSLAFMGFSGLVKL</sequence>
<comment type="function">
    <text evidence="1">Part of a membrane-bound complex that couples electron transfer with translocation of ions across the membrane. Required to maintain the reduced state of SoxR.</text>
</comment>
<comment type="subunit">
    <text evidence="1">The complex is composed of six subunits: RsxA, RsxB, RsxC, RsxD, RsxE and RsxG.</text>
</comment>
<comment type="subcellular location">
    <subcellularLocation>
        <location evidence="1">Cell inner membrane</location>
        <topology evidence="1">Multi-pass membrane protein</topology>
    </subcellularLocation>
</comment>
<comment type="similarity">
    <text evidence="1">Belongs to the NqrDE/RnfAE family.</text>
</comment>
<evidence type="ECO:0000255" key="1">
    <source>
        <dbReference type="HAMAP-Rule" id="MF_00459"/>
    </source>
</evidence>
<keyword id="KW-0997">Cell inner membrane</keyword>
<keyword id="KW-1003">Cell membrane</keyword>
<keyword id="KW-0249">Electron transport</keyword>
<keyword id="KW-0472">Membrane</keyword>
<keyword id="KW-1185">Reference proteome</keyword>
<keyword id="KW-1278">Translocase</keyword>
<keyword id="KW-0812">Transmembrane</keyword>
<keyword id="KW-1133">Transmembrane helix</keyword>
<keyword id="KW-0813">Transport</keyword>
<accession>B2U2C6</accession>
<protein>
    <recommendedName>
        <fullName evidence="1">Ion-translocating oxidoreductase complex subunit A</fullName>
        <ecNumber evidence="1">7.-.-.-</ecNumber>
    </recommendedName>
    <alternativeName>
        <fullName evidence="1">Rsx electron transport complex subunit A</fullName>
    </alternativeName>
</protein>
<proteinExistence type="inferred from homology"/>
<dbReference type="EC" id="7.-.-.-" evidence="1"/>
<dbReference type="EMBL" id="CP001063">
    <property type="protein sequence ID" value="ACD07709.1"/>
    <property type="molecule type" value="Genomic_DNA"/>
</dbReference>
<dbReference type="RefSeq" id="WP_000133193.1">
    <property type="nucleotide sequence ID" value="NC_010658.1"/>
</dbReference>
<dbReference type="SMR" id="B2U2C6"/>
<dbReference type="STRING" id="344609.SbBS512_E1816"/>
<dbReference type="GeneID" id="89516393"/>
<dbReference type="KEGG" id="sbc:SbBS512_E1816"/>
<dbReference type="HOGENOM" id="CLU_095255_1_0_6"/>
<dbReference type="Proteomes" id="UP000001030">
    <property type="component" value="Chromosome"/>
</dbReference>
<dbReference type="GO" id="GO:0005886">
    <property type="term" value="C:plasma membrane"/>
    <property type="evidence" value="ECO:0007669"/>
    <property type="project" value="UniProtKB-SubCell"/>
</dbReference>
<dbReference type="GO" id="GO:0022900">
    <property type="term" value="P:electron transport chain"/>
    <property type="evidence" value="ECO:0007669"/>
    <property type="project" value="UniProtKB-UniRule"/>
</dbReference>
<dbReference type="HAMAP" id="MF_00459">
    <property type="entry name" value="RsxA_RnfA"/>
    <property type="match status" value="1"/>
</dbReference>
<dbReference type="InterPro" id="IPR011293">
    <property type="entry name" value="Ion_transpt_RnfA/RsxA"/>
</dbReference>
<dbReference type="InterPro" id="IPR003667">
    <property type="entry name" value="NqrDE/RnfAE"/>
</dbReference>
<dbReference type="InterPro" id="IPR050133">
    <property type="entry name" value="NqrDE/RnfAE_oxidrdctase"/>
</dbReference>
<dbReference type="NCBIfam" id="NF003481">
    <property type="entry name" value="PRK05151.1"/>
    <property type="match status" value="1"/>
</dbReference>
<dbReference type="NCBIfam" id="TIGR01943">
    <property type="entry name" value="rnfA"/>
    <property type="match status" value="1"/>
</dbReference>
<dbReference type="PANTHER" id="PTHR30335">
    <property type="entry name" value="INTEGRAL MEMBRANE PROTEIN OF SOXR-REDUCING COMPLEX"/>
    <property type="match status" value="1"/>
</dbReference>
<dbReference type="PANTHER" id="PTHR30335:SF0">
    <property type="entry name" value="ION-TRANSLOCATING OXIDOREDUCTASE COMPLEX SUBUNIT A"/>
    <property type="match status" value="1"/>
</dbReference>
<dbReference type="Pfam" id="PF02508">
    <property type="entry name" value="Rnf-Nqr"/>
    <property type="match status" value="1"/>
</dbReference>
<dbReference type="PIRSF" id="PIRSF006102">
    <property type="entry name" value="NQR_DE"/>
    <property type="match status" value="1"/>
</dbReference>